<accession>Q4R362</accession>
<dbReference type="EMBL" id="AB179406">
    <property type="protein sequence ID" value="BAE02457.1"/>
    <property type="molecule type" value="mRNA"/>
</dbReference>
<dbReference type="RefSeq" id="XP_005553865.1">
    <property type="nucleotide sequence ID" value="XM_005553808.2"/>
</dbReference>
<dbReference type="RefSeq" id="XP_005553915.1">
    <property type="nucleotide sequence ID" value="XM_005553858.2"/>
</dbReference>
<dbReference type="RefSeq" id="XP_005595820.1">
    <property type="nucleotide sequence ID" value="XM_005595763.2"/>
</dbReference>
<dbReference type="RefSeq" id="XP_015300301.1">
    <property type="nucleotide sequence ID" value="XM_015444815.1"/>
</dbReference>
<dbReference type="RefSeq" id="XP_015305258.1">
    <property type="nucleotide sequence ID" value="XM_015449772.1"/>
</dbReference>
<dbReference type="RefSeq" id="XP_015305275.1">
    <property type="nucleotide sequence ID" value="XM_015449789.1"/>
</dbReference>
<dbReference type="RefSeq" id="XP_015305282.1">
    <property type="nucleotide sequence ID" value="XM_015449796.1"/>
</dbReference>
<dbReference type="SMR" id="Q4R362"/>
<dbReference type="STRING" id="9541.ENSMFAP00000001801"/>
<dbReference type="Ensembl" id="ENSMFAT00000073932.1">
    <property type="protein sequence ID" value="ENSMFAP00000060160.1"/>
    <property type="gene ID" value="ENSMFAG00000047801.1"/>
</dbReference>
<dbReference type="Ensembl" id="ENSMFAT00000076138.1">
    <property type="protein sequence ID" value="ENSMFAP00000050616.1"/>
    <property type="gene ID" value="ENSMFAG00000059817.1"/>
</dbReference>
<dbReference type="Ensembl" id="ENSMFAT00000084708.1">
    <property type="protein sequence ID" value="ENSMFAP00000054204.1"/>
    <property type="gene ID" value="ENSMFAG00000049183.1"/>
</dbReference>
<dbReference type="Ensembl" id="ENSMFAT00000087807.1">
    <property type="protein sequence ID" value="ENSMFAP00000061761.1"/>
    <property type="gene ID" value="ENSMFAG00000059848.1"/>
</dbReference>
<dbReference type="Ensembl" id="ENSMFAT00000088574.1">
    <property type="protein sequence ID" value="ENSMFAP00000062404.1"/>
    <property type="gene ID" value="ENSMFAG00000055044.1"/>
</dbReference>
<dbReference type="Ensembl" id="ENSMFAT00000092399.1">
    <property type="protein sequence ID" value="ENSMFAP00000059355.1"/>
    <property type="gene ID" value="ENSMFAG00000051323.1"/>
</dbReference>
<dbReference type="Ensembl" id="ENSMFAT00000100177.1">
    <property type="protein sequence ID" value="ENSMFAP00000063504.1"/>
    <property type="gene ID" value="ENSMFAG00000060595.1"/>
</dbReference>
<dbReference type="Ensembl" id="ENSMFAT00000101353.1">
    <property type="protein sequence ID" value="ENSMFAP00000046291.1"/>
    <property type="gene ID" value="ENSMFAG00000064237.1"/>
</dbReference>
<dbReference type="KEGG" id="mcf:102121500"/>
<dbReference type="KEGG" id="mcf:102132001"/>
<dbReference type="KEGG" id="mcf:107129595"/>
<dbReference type="VEuPathDB" id="HostDB:ENSMFAG00000004793"/>
<dbReference type="VEuPathDB" id="HostDB:ENSMFAG00000007792"/>
<dbReference type="VEuPathDB" id="HostDB:ENSMFAG00000009138"/>
<dbReference type="VEuPathDB" id="HostDB:ENSMFAG00000010779"/>
<dbReference type="VEuPathDB" id="HostDB:ENSMFAG00000010981"/>
<dbReference type="VEuPathDB" id="HostDB:ENSMFAG00000011190"/>
<dbReference type="VEuPathDB" id="HostDB:ENSMFAG00000013334"/>
<dbReference type="VEuPathDB" id="HostDB:ENSMFAG00000029079"/>
<dbReference type="VEuPathDB" id="HostDB:ENSMFAG00000030750"/>
<dbReference type="VEuPathDB" id="HostDB:ENSMFAG00000030781"/>
<dbReference type="VEuPathDB" id="HostDB:ENSMFAG00000030786"/>
<dbReference type="VEuPathDB" id="HostDB:ENSMFAG00000030821"/>
<dbReference type="VEuPathDB" id="HostDB:ENSMFAG00000033838"/>
<dbReference type="VEuPathDB" id="HostDB:ENSMFAG00000037475"/>
<dbReference type="eggNOG" id="KOG3467">
    <property type="taxonomic scope" value="Eukaryota"/>
</dbReference>
<dbReference type="GeneTree" id="ENSGT01060000248528"/>
<dbReference type="OrthoDB" id="16432at314294"/>
<dbReference type="Proteomes" id="UP000233100">
    <property type="component" value="Chromosome 1"/>
</dbReference>
<dbReference type="Proteomes" id="UP000233100">
    <property type="component" value="Chromosome 4"/>
</dbReference>
<dbReference type="GO" id="GO:0000786">
    <property type="term" value="C:nucleosome"/>
    <property type="evidence" value="ECO:0007669"/>
    <property type="project" value="UniProtKB-KW"/>
</dbReference>
<dbReference type="GO" id="GO:0005634">
    <property type="term" value="C:nucleus"/>
    <property type="evidence" value="ECO:0007669"/>
    <property type="project" value="UniProtKB-SubCell"/>
</dbReference>
<dbReference type="GO" id="GO:0003677">
    <property type="term" value="F:DNA binding"/>
    <property type="evidence" value="ECO:0007669"/>
    <property type="project" value="UniProtKB-KW"/>
</dbReference>
<dbReference type="GO" id="GO:0046982">
    <property type="term" value="F:protein heterodimerization activity"/>
    <property type="evidence" value="ECO:0007669"/>
    <property type="project" value="InterPro"/>
</dbReference>
<dbReference type="GO" id="GO:0030527">
    <property type="term" value="F:structural constituent of chromatin"/>
    <property type="evidence" value="ECO:0007669"/>
    <property type="project" value="InterPro"/>
</dbReference>
<dbReference type="CDD" id="cd22912">
    <property type="entry name" value="HFD_H4"/>
    <property type="match status" value="1"/>
</dbReference>
<dbReference type="FunFam" id="1.10.20.10:FF:000002">
    <property type="entry name" value="Histone H4"/>
    <property type="match status" value="1"/>
</dbReference>
<dbReference type="Gene3D" id="1.10.20.10">
    <property type="entry name" value="Histone, subunit A"/>
    <property type="match status" value="1"/>
</dbReference>
<dbReference type="InterPro" id="IPR035425">
    <property type="entry name" value="CENP-T/H4_C"/>
</dbReference>
<dbReference type="InterPro" id="IPR009072">
    <property type="entry name" value="Histone-fold"/>
</dbReference>
<dbReference type="InterPro" id="IPR001951">
    <property type="entry name" value="Histone_H4"/>
</dbReference>
<dbReference type="InterPro" id="IPR019809">
    <property type="entry name" value="Histone_H4_CS"/>
</dbReference>
<dbReference type="InterPro" id="IPR004823">
    <property type="entry name" value="TAF_TATA-bd_Histone-like_dom"/>
</dbReference>
<dbReference type="PANTHER" id="PTHR10484">
    <property type="entry name" value="HISTONE H4"/>
    <property type="match status" value="1"/>
</dbReference>
<dbReference type="Pfam" id="PF15511">
    <property type="entry name" value="CENP-T_C"/>
    <property type="match status" value="1"/>
</dbReference>
<dbReference type="PRINTS" id="PR00623">
    <property type="entry name" value="HISTONEH4"/>
</dbReference>
<dbReference type="SMART" id="SM00417">
    <property type="entry name" value="H4"/>
    <property type="match status" value="1"/>
</dbReference>
<dbReference type="SMART" id="SM00803">
    <property type="entry name" value="TAF"/>
    <property type="match status" value="1"/>
</dbReference>
<dbReference type="SUPFAM" id="SSF47113">
    <property type="entry name" value="Histone-fold"/>
    <property type="match status" value="1"/>
</dbReference>
<dbReference type="PROSITE" id="PS00047">
    <property type="entry name" value="HISTONE_H4"/>
    <property type="match status" value="1"/>
</dbReference>
<organism>
    <name type="scientific">Macaca fascicularis</name>
    <name type="common">Crab-eating macaque</name>
    <name type="synonym">Cynomolgus monkey</name>
    <dbReference type="NCBI Taxonomy" id="9541"/>
    <lineage>
        <taxon>Eukaryota</taxon>
        <taxon>Metazoa</taxon>
        <taxon>Chordata</taxon>
        <taxon>Craniata</taxon>
        <taxon>Vertebrata</taxon>
        <taxon>Euteleostomi</taxon>
        <taxon>Mammalia</taxon>
        <taxon>Eutheria</taxon>
        <taxon>Euarchontoglires</taxon>
        <taxon>Primates</taxon>
        <taxon>Haplorrhini</taxon>
        <taxon>Catarrhini</taxon>
        <taxon>Cercopithecidae</taxon>
        <taxon>Cercopithecinae</taxon>
        <taxon>Macaca</taxon>
    </lineage>
</organism>
<feature type="initiator methionine" description="Removed" evidence="2">
    <location>
        <position position="1"/>
    </location>
</feature>
<feature type="chain" id="PRO_0000307386" description="Histone H4">
    <location>
        <begin position="2"/>
        <end position="103"/>
    </location>
</feature>
<feature type="DNA-binding region" evidence="1">
    <location>
        <begin position="17"/>
        <end position="21"/>
    </location>
</feature>
<feature type="region of interest" description="Disordered" evidence="5">
    <location>
        <begin position="1"/>
        <end position="20"/>
    </location>
</feature>
<feature type="compositionally biased region" description="Gly residues" evidence="5">
    <location>
        <begin position="1"/>
        <end position="14"/>
    </location>
</feature>
<feature type="modified residue" description="N-acetylserine" evidence="2">
    <location>
        <position position="2"/>
    </location>
</feature>
<feature type="modified residue" description="Phosphoserine" evidence="3">
    <location>
        <position position="2"/>
    </location>
</feature>
<feature type="modified residue" description="Asymmetric dimethylarginine; by PRMT1; alternate" evidence="3">
    <location>
        <position position="4"/>
    </location>
</feature>
<feature type="modified residue" description="Citrulline; alternate" evidence="1">
    <location>
        <position position="4"/>
    </location>
</feature>
<feature type="modified residue" description="Omega-N-methylarginine; by PRMT1; alternate" evidence="3">
    <location>
        <position position="4"/>
    </location>
</feature>
<feature type="modified residue" description="Symmetric dimethylarginine; by PRMT5 and PRMT7; alternate" evidence="4">
    <location>
        <position position="4"/>
    </location>
</feature>
<feature type="modified residue" description="N6-(2-hydroxyisobutyryl)lysine; alternate" evidence="3">
    <location>
        <position position="6"/>
    </location>
</feature>
<feature type="modified residue" description="N6-acetyl-N6-methyllysine; alternate" evidence="3">
    <location>
        <position position="6"/>
    </location>
</feature>
<feature type="modified residue" description="N6-acetyllysine; alternate" evidence="3">
    <location>
        <position position="6"/>
    </location>
</feature>
<feature type="modified residue" description="N6-butyryllysine; alternate" evidence="3">
    <location>
        <position position="6"/>
    </location>
</feature>
<feature type="modified residue" description="N6-crotonyllysine; alternate" evidence="1">
    <location>
        <position position="6"/>
    </location>
</feature>
<feature type="modified residue" description="N6-glutaryllysine; alternate" evidence="3">
    <location>
        <position position="6"/>
    </location>
</feature>
<feature type="modified residue" description="N6-lactoyllysine; alternate" evidence="3">
    <location>
        <position position="6"/>
    </location>
</feature>
<feature type="modified residue" description="N6-(2-hydroxyisobutyryl)lysine; alternate" evidence="3">
    <location>
        <position position="9"/>
    </location>
</feature>
<feature type="modified residue" description="N6-(beta-hydroxybutyryl)lysine; alternate" evidence="4">
    <location>
        <position position="9"/>
    </location>
</feature>
<feature type="modified residue" description="N6-acetyllysine; alternate" evidence="3">
    <location>
        <position position="9"/>
    </location>
</feature>
<feature type="modified residue" description="N6-butyryllysine; alternate" evidence="3">
    <location>
        <position position="9"/>
    </location>
</feature>
<feature type="modified residue" description="N6-crotonyllysine; alternate" evidence="1">
    <location>
        <position position="9"/>
    </location>
</feature>
<feature type="modified residue" description="N6-lactoyllysine; alternate" evidence="3">
    <location>
        <position position="9"/>
    </location>
</feature>
<feature type="modified residue" description="N6-propionyllysine; alternate" evidence="3">
    <location>
        <position position="9"/>
    </location>
</feature>
<feature type="modified residue" description="N6-(2-hydroxyisobutyryl)lysine; alternate" evidence="3">
    <location>
        <position position="13"/>
    </location>
</feature>
<feature type="modified residue" description="N6-(beta-hydroxybutyryl)lysine; alternate" evidence="4">
    <location>
        <position position="13"/>
    </location>
</feature>
<feature type="modified residue" description="N6-acetyl-N6-methyllysine; alternate" evidence="3">
    <location>
        <position position="13"/>
    </location>
</feature>
<feature type="modified residue" description="N6-acetyllysine; alternate" evidence="3">
    <location>
        <position position="13"/>
    </location>
</feature>
<feature type="modified residue" description="N6-butyryllysine; alternate" evidence="3">
    <location>
        <position position="13"/>
    </location>
</feature>
<feature type="modified residue" description="N6-crotonyllysine; alternate" evidence="1">
    <location>
        <position position="13"/>
    </location>
</feature>
<feature type="modified residue" description="N6-glutaryllysine; alternate" evidence="3">
    <location>
        <position position="13"/>
    </location>
</feature>
<feature type="modified residue" description="N6-lactoyllysine; alternate" evidence="3">
    <location>
        <position position="13"/>
    </location>
</feature>
<feature type="modified residue" description="N6-methyllysine; alternate" evidence="3">
    <location>
        <position position="13"/>
    </location>
</feature>
<feature type="modified residue" description="N6-succinyllysine; alternate" evidence="3">
    <location>
        <position position="13"/>
    </location>
</feature>
<feature type="modified residue" description="N6-(2-hydroxyisobutyryl)lysine; alternate" evidence="3">
    <location>
        <position position="17"/>
    </location>
</feature>
<feature type="modified residue" description="N6-acetyllysine; alternate" evidence="2">
    <location>
        <position position="17"/>
    </location>
</feature>
<feature type="modified residue" description="N6-butyryllysine; alternate" evidence="3">
    <location>
        <position position="17"/>
    </location>
</feature>
<feature type="modified residue" description="N6-crotonyllysine; alternate" evidence="1">
    <location>
        <position position="17"/>
    </location>
</feature>
<feature type="modified residue" description="N6-lactoyllysine; alternate" evidence="3">
    <location>
        <position position="17"/>
    </location>
</feature>
<feature type="modified residue" description="N6-propionyllysine; alternate" evidence="3">
    <location>
        <position position="17"/>
    </location>
</feature>
<feature type="modified residue" description="N6,N6,N6-trimethyllysine; alternate" evidence="3">
    <location>
        <position position="21"/>
    </location>
</feature>
<feature type="modified residue" description="N6,N6-dimethyllysine; alternate" evidence="2">
    <location>
        <position position="21"/>
    </location>
</feature>
<feature type="modified residue" description="N6-methyllysine; alternate" evidence="2">
    <location>
        <position position="21"/>
    </location>
</feature>
<feature type="modified residue" description="N6-(2-hydroxyisobutyryl)lysine; alternate" evidence="3">
    <location>
        <position position="32"/>
    </location>
</feature>
<feature type="modified residue" description="N6-acetyllysine; alternate" evidence="3">
    <location>
        <position position="32"/>
    </location>
</feature>
<feature type="modified residue" description="N6-butyryllysine; alternate" evidence="3">
    <location>
        <position position="32"/>
    </location>
</feature>
<feature type="modified residue" description="N6-glutaryllysine; alternate" evidence="3">
    <location>
        <position position="32"/>
    </location>
</feature>
<feature type="modified residue" description="N6-lactoyllysine; alternate" evidence="3">
    <location>
        <position position="32"/>
    </location>
</feature>
<feature type="modified residue" description="N6-propionyllysine; alternate" evidence="3">
    <location>
        <position position="32"/>
    </location>
</feature>
<feature type="modified residue" description="N6-succinyllysine; alternate" evidence="3">
    <location>
        <position position="32"/>
    </location>
</feature>
<feature type="modified residue" description="N6-(2-hydroxyisobutyryl)lysine; alternate" evidence="3">
    <location>
        <position position="45"/>
    </location>
</feature>
<feature type="modified residue" description="N6-butyryllysine; alternate" evidence="3">
    <location>
        <position position="45"/>
    </location>
</feature>
<feature type="modified residue" description="N6-propionyllysine; alternate" evidence="3">
    <location>
        <position position="45"/>
    </location>
</feature>
<feature type="modified residue" description="Phosphoserine; by PAK2" evidence="3">
    <location>
        <position position="48"/>
    </location>
</feature>
<feature type="modified residue" description="Phosphotyrosine" evidence="3">
    <location>
        <position position="52"/>
    </location>
</feature>
<feature type="modified residue" description="N6-(2-hydroxyisobutyryl)lysine; alternate" evidence="3">
    <location>
        <position position="60"/>
    </location>
</feature>
<feature type="modified residue" description="N6-glutaryllysine; alternate" evidence="3">
    <location>
        <position position="60"/>
    </location>
</feature>
<feature type="modified residue" description="N6-(2-hydroxyisobutyryl)lysine; alternate" evidence="3">
    <location>
        <position position="78"/>
    </location>
</feature>
<feature type="modified residue" description="N6-butyryllysine; alternate" evidence="3">
    <location>
        <position position="78"/>
    </location>
</feature>
<feature type="modified residue" description="N6-glutaryllysine; alternate" evidence="3">
    <location>
        <position position="78"/>
    </location>
</feature>
<feature type="modified residue" description="N6-lactoyllysine; alternate" evidence="3">
    <location>
        <position position="78"/>
    </location>
</feature>
<feature type="modified residue" description="N6-propionyllysine; alternate" evidence="3">
    <location>
        <position position="78"/>
    </location>
</feature>
<feature type="modified residue" description="N6-succinyllysine; alternate" evidence="3">
    <location>
        <position position="78"/>
    </location>
</feature>
<feature type="modified residue" description="N6-(2-hydroxyisobutyryl)lysine; alternate" evidence="3">
    <location>
        <position position="80"/>
    </location>
</feature>
<feature type="modified residue" description="N6-butyryllysine; alternate" evidence="3">
    <location>
        <position position="80"/>
    </location>
</feature>
<feature type="modified residue" description="N6-glutaryllysine; alternate" evidence="3">
    <location>
        <position position="80"/>
    </location>
</feature>
<feature type="modified residue" description="N6-propionyllysine; alternate" evidence="3">
    <location>
        <position position="80"/>
    </location>
</feature>
<feature type="modified residue" description="N6-succinyllysine; alternate" evidence="4">
    <location>
        <position position="80"/>
    </location>
</feature>
<feature type="modified residue" description="Phosphothreonine" evidence="4">
    <location>
        <position position="81"/>
    </location>
</feature>
<feature type="modified residue" description="Phosphotyrosine" evidence="3">
    <location>
        <position position="89"/>
    </location>
</feature>
<feature type="modified residue" description="N6-(2-hydroxyisobutyryl)lysine; alternate" evidence="3">
    <location>
        <position position="92"/>
    </location>
</feature>
<feature type="modified residue" description="N6-acetyllysine; alternate" evidence="3">
    <location>
        <position position="92"/>
    </location>
</feature>
<feature type="modified residue" description="N6-butyryllysine; alternate" evidence="3">
    <location>
        <position position="92"/>
    </location>
</feature>
<feature type="modified residue" description="N6-glutaryllysine; alternate" evidence="3">
    <location>
        <position position="92"/>
    </location>
</feature>
<feature type="modified residue" description="N6-lactoyllysine; alternate" evidence="3">
    <location>
        <position position="92"/>
    </location>
</feature>
<feature type="modified residue" description="N6-propionyllysine; alternate" evidence="3">
    <location>
        <position position="92"/>
    </location>
</feature>
<feature type="modified residue" description="N6-succinyllysine; alternate" evidence="3">
    <location>
        <position position="92"/>
    </location>
</feature>
<feature type="cross-link" description="Glycyl lysine isopeptide (Lys-Gly) (interchain with G-Cter in SUMO2); alternate" evidence="3">
    <location>
        <position position="13"/>
    </location>
</feature>
<feature type="cross-link" description="Glycyl lysine isopeptide (Lys-Gly) (interchain with G-Cter in SUMO2); alternate" evidence="3">
    <location>
        <position position="21"/>
    </location>
</feature>
<feature type="cross-link" description="Glycyl lysine isopeptide (Lys-Gly) (interchain with G-Cter in SUMO2); alternate" evidence="3">
    <location>
        <position position="32"/>
    </location>
</feature>
<feature type="cross-link" description="Glycyl lysine isopeptide (Lys-Gly) (interchain with G-Cter in UFM1); alternate" evidence="3">
    <location>
        <position position="32"/>
    </location>
</feature>
<feature type="cross-link" description="Glycyl lysine isopeptide (Lys-Gly) (interchain with G-Cter in SUMO2); alternate" evidence="3">
    <location>
        <position position="60"/>
    </location>
</feature>
<feature type="cross-link" description="Glycyl lysine isopeptide (Lys-Gly) (interchain with G-Cter in SUMO2); alternate" evidence="3">
    <location>
        <position position="80"/>
    </location>
</feature>
<feature type="cross-link" description="Glycyl lysine isopeptide (Lys-Gly) (interchain with G-Cter in SUMO2); alternate" evidence="3">
    <location>
        <position position="92"/>
    </location>
</feature>
<feature type="cross-link" description="Glycyl lysine isopeptide (Lys-Gly) (interchain with G-Cter in ubiquitin); alternate" evidence="3">
    <location>
        <position position="92"/>
    </location>
</feature>
<gene>
    <name type="ORF">QtsA-19327</name>
</gene>
<name>H4_MACFA</name>
<reference key="1">
    <citation type="submission" date="2005-06" db="EMBL/GenBank/DDBJ databases">
        <title>DNA sequences of macaque genes expressed in brain or testis and its evolutionary implications.</title>
        <authorList>
            <consortium name="International consortium for macaque cDNA sequencing and analysis"/>
        </authorList>
    </citation>
    <scope>NUCLEOTIDE SEQUENCE [LARGE SCALE MRNA]</scope>
    <source>
        <tissue>Testis</tissue>
    </source>
</reference>
<evidence type="ECO:0000250" key="1"/>
<evidence type="ECO:0000250" key="2">
    <source>
        <dbReference type="UniProtKB" id="P62803"/>
    </source>
</evidence>
<evidence type="ECO:0000250" key="3">
    <source>
        <dbReference type="UniProtKB" id="P62805"/>
    </source>
</evidence>
<evidence type="ECO:0000250" key="4">
    <source>
        <dbReference type="UniProtKB" id="P62806"/>
    </source>
</evidence>
<evidence type="ECO:0000256" key="5">
    <source>
        <dbReference type="SAM" id="MobiDB-lite"/>
    </source>
</evidence>
<evidence type="ECO:0000305" key="6"/>
<proteinExistence type="inferred from homology"/>
<protein>
    <recommendedName>
        <fullName>Histone H4</fullName>
    </recommendedName>
</protein>
<keyword id="KW-0007">Acetylation</keyword>
<keyword id="KW-0158">Chromosome</keyword>
<keyword id="KW-0164">Citrullination</keyword>
<keyword id="KW-0238">DNA-binding</keyword>
<keyword id="KW-0379">Hydroxylation</keyword>
<keyword id="KW-1017">Isopeptide bond</keyword>
<keyword id="KW-0488">Methylation</keyword>
<keyword id="KW-0544">Nucleosome core</keyword>
<keyword id="KW-0539">Nucleus</keyword>
<keyword id="KW-0597">Phosphoprotein</keyword>
<keyword id="KW-1185">Reference proteome</keyword>
<keyword id="KW-0832">Ubl conjugation</keyword>
<comment type="function">
    <text evidence="1">Core component of nucleosome. Nucleosomes wrap and compact DNA into chromatin, limiting DNA accessibility to the cellular machineries which require DNA as a template. Histones thereby play a central role in transcription regulation, DNA repair, DNA replication and chromosomal stability. DNA accessibility is regulated via a complex set of post-translational modifications of histones, also called histone code, and nucleosome remodeling (By similarity).</text>
</comment>
<comment type="subunit">
    <text evidence="3 4">The nucleosome is a histone octamer containing two molecules each of H2A, H2B, H3 and H4 assembled in one H3-H4 heterotetramer and two H2A-H2B heterodimers. The octamer wraps approximately 147 bp of DNA (By similarity). Found in a co-chaperone complex with DNJC9, MCM2 and histone H3.3-H4 dimers (By similarity). Within the complex, interacts with DNJC9 (via C-terminus); the interaction is direct (By similarity). Interacts with NASP; NASP is a histone chaperone that stabilizes and maintains a soluble pool of Histone H3-H4 dimers (By similarity).</text>
</comment>
<comment type="subcellular location">
    <subcellularLocation>
        <location evidence="4">Nucleus</location>
    </subcellularLocation>
    <subcellularLocation>
        <location evidence="1">Chromosome</location>
    </subcellularLocation>
    <text evidence="4">Localized to the nucleus when acetylated in step 11 spermatids.</text>
</comment>
<comment type="PTM">
    <text evidence="3 4">Acetylation at Lys-6 (H4K5ac), Lys-9 (H4K8ac), Lys-13 (H4K12ac) and Lys-17 (H4K16ac) occurs in coding regions of the genome but not in heterochromatin. Acetylated as part of spermatogenesis progression prior to histone-to-protamine exchange (By similarity).</text>
</comment>
<comment type="PTM">
    <text evidence="3">Citrullination at Arg-4 (H4R3ci) by PADI4 impairs methylation.</text>
</comment>
<comment type="PTM">
    <text evidence="3">Monomethylation and asymmetric dimethylation at Arg-4 (H4R3me1 and H4R3me2a, respectively) by PRMT1 favors acetylation at Lys-9 (H4K8ac) and Lys-13 (H4K12ac). Demethylation is performed by JMJD6. Symmetric dimethylation on Arg-4 (H4R3me2s) by the PRDM1/PRMT5 complex may play a crucial role in the germ-cell lineage (By similarity).</text>
</comment>
<comment type="PTM">
    <text evidence="3">Monomethylated, dimethylated or trimethylated at Lys-21 (H4K20me1, H4K20me2, H4K20me3). Monomethylation is performed by KMT5A/SET8. Trimethylation is performed by KMT5B and KMT5C and induces gene silencing. Monomethylated at Lys-13 (H4K12me1) by N6AMT1; H4K12me1 modification is present at the promoters of numerous genes encoding cell cycle regulators.</text>
</comment>
<comment type="PTM">
    <text evidence="3">Acetyl-methylated at Lys-6 and Lys-13 (H4K5acme and H4K12acme, respectively), acetyl-methylation is an epigenetic mark of active chromatin associated with increased transcriptional initiation. Acetyl-methylation is formed by acetylation by EP300/p300 of lysine residues that are already monomethylated on the same side chain. H4K5acme and H4K12acme marks specifically bind BRD2.</text>
</comment>
<comment type="PTM">
    <text evidence="3">Phosphorylated by PAK2 at Ser-48 (H4S47ph). This phosphorylation increases the association of H3.3-H4 with the histone chaperone HIRA, thus promoting nucleosome assembly of H3.3-H4 and inhibiting nucleosome assembly of H3.1-H4 (By similarity).</text>
</comment>
<comment type="PTM">
    <text evidence="3 4">Ubiquitinated by the CUL4-DDB-RBX1 complex in response to ultraviolet irradiation. This may weaken the interaction between histones and DNA and facilitate DNA accessibility to repair proteins. Monoubiquitinated at Lys-92 of histone H4 (H4K91ub1) in response to DNA damage. The exact role of H4K91ub1 in DNA damage response is still unclear but it may function as a licensing signal for additional histone H4 post-translational modifications such as H4 Lys-21 methylation (H4K20me) (By similarity). Ubiquitinated; by PHF7 (By similarity).</text>
</comment>
<comment type="PTM">
    <text evidence="3">Sumoylated, which is associated with transcriptional repression.</text>
</comment>
<comment type="PTM">
    <text evidence="3">Crotonylation (Kcr) is specifically present in male germ cells and marks testis-specific genes in post-meiotic cells, including X-linked genes that escape sex chromosome inactivation in haploid cells. Crotonylation marks active promoters and enhancers and confers resistance to transcriptional repressors. It is also associated with post-meiotically activated genes on autosomes (By similarity).</text>
</comment>
<comment type="PTM">
    <text evidence="4">Butyrylation of histones marks active promoters and competes with histone acetylation.</text>
</comment>
<comment type="PTM">
    <text evidence="3">Glutarylation at Lys-92 (H4K91glu) destabilizes nucleosomes by promoting dissociation of the H2A-H2B dimers from nucleosomes.</text>
</comment>
<comment type="PTM">
    <text evidence="3">Ufmylated; monofmylated by UFL1 at Lys-32 (H4K31Ufm1) in response to DNA damage.</text>
</comment>
<comment type="PTM">
    <text evidence="3">Lactylated in macrophages by EP300/P300 by using lactoyl-CoA directly derived from endogenous or exogenous lactate, leading to stimulates gene transcription. Delactylated by SIRT3 at Lys-17 (H4K16la).</text>
</comment>
<comment type="similarity">
    <text evidence="6">Belongs to the histone H4 family.</text>
</comment>
<sequence length="103" mass="11367">MSGRGKGGKGLGKGGAKRHRKVLRDNIQGITKPAIRRLARRGGVKRISGLIYEETRGVLKVFLENVIRDAVTYTEHAKRKTVTAMDVVYALKRQGRTLYGFGG</sequence>